<reference key="1">
    <citation type="journal article" date="2005" name="Science">
        <title>The transcriptional landscape of the mammalian genome.</title>
        <authorList>
            <person name="Carninci P."/>
            <person name="Kasukawa T."/>
            <person name="Katayama S."/>
            <person name="Gough J."/>
            <person name="Frith M.C."/>
            <person name="Maeda N."/>
            <person name="Oyama R."/>
            <person name="Ravasi T."/>
            <person name="Lenhard B."/>
            <person name="Wells C."/>
            <person name="Kodzius R."/>
            <person name="Shimokawa K."/>
            <person name="Bajic V.B."/>
            <person name="Brenner S.E."/>
            <person name="Batalov S."/>
            <person name="Forrest A.R."/>
            <person name="Zavolan M."/>
            <person name="Davis M.J."/>
            <person name="Wilming L.G."/>
            <person name="Aidinis V."/>
            <person name="Allen J.E."/>
            <person name="Ambesi-Impiombato A."/>
            <person name="Apweiler R."/>
            <person name="Aturaliya R.N."/>
            <person name="Bailey T.L."/>
            <person name="Bansal M."/>
            <person name="Baxter L."/>
            <person name="Beisel K.W."/>
            <person name="Bersano T."/>
            <person name="Bono H."/>
            <person name="Chalk A.M."/>
            <person name="Chiu K.P."/>
            <person name="Choudhary V."/>
            <person name="Christoffels A."/>
            <person name="Clutterbuck D.R."/>
            <person name="Crowe M.L."/>
            <person name="Dalla E."/>
            <person name="Dalrymple B.P."/>
            <person name="de Bono B."/>
            <person name="Della Gatta G."/>
            <person name="di Bernardo D."/>
            <person name="Down T."/>
            <person name="Engstrom P."/>
            <person name="Fagiolini M."/>
            <person name="Faulkner G."/>
            <person name="Fletcher C.F."/>
            <person name="Fukushima T."/>
            <person name="Furuno M."/>
            <person name="Futaki S."/>
            <person name="Gariboldi M."/>
            <person name="Georgii-Hemming P."/>
            <person name="Gingeras T.R."/>
            <person name="Gojobori T."/>
            <person name="Green R.E."/>
            <person name="Gustincich S."/>
            <person name="Harbers M."/>
            <person name="Hayashi Y."/>
            <person name="Hensch T.K."/>
            <person name="Hirokawa N."/>
            <person name="Hill D."/>
            <person name="Huminiecki L."/>
            <person name="Iacono M."/>
            <person name="Ikeo K."/>
            <person name="Iwama A."/>
            <person name="Ishikawa T."/>
            <person name="Jakt M."/>
            <person name="Kanapin A."/>
            <person name="Katoh M."/>
            <person name="Kawasawa Y."/>
            <person name="Kelso J."/>
            <person name="Kitamura H."/>
            <person name="Kitano H."/>
            <person name="Kollias G."/>
            <person name="Krishnan S.P."/>
            <person name="Kruger A."/>
            <person name="Kummerfeld S.K."/>
            <person name="Kurochkin I.V."/>
            <person name="Lareau L.F."/>
            <person name="Lazarevic D."/>
            <person name="Lipovich L."/>
            <person name="Liu J."/>
            <person name="Liuni S."/>
            <person name="McWilliam S."/>
            <person name="Madan Babu M."/>
            <person name="Madera M."/>
            <person name="Marchionni L."/>
            <person name="Matsuda H."/>
            <person name="Matsuzawa S."/>
            <person name="Miki H."/>
            <person name="Mignone F."/>
            <person name="Miyake S."/>
            <person name="Morris K."/>
            <person name="Mottagui-Tabar S."/>
            <person name="Mulder N."/>
            <person name="Nakano N."/>
            <person name="Nakauchi H."/>
            <person name="Ng P."/>
            <person name="Nilsson R."/>
            <person name="Nishiguchi S."/>
            <person name="Nishikawa S."/>
            <person name="Nori F."/>
            <person name="Ohara O."/>
            <person name="Okazaki Y."/>
            <person name="Orlando V."/>
            <person name="Pang K.C."/>
            <person name="Pavan W.J."/>
            <person name="Pavesi G."/>
            <person name="Pesole G."/>
            <person name="Petrovsky N."/>
            <person name="Piazza S."/>
            <person name="Reed J."/>
            <person name="Reid J.F."/>
            <person name="Ring B.Z."/>
            <person name="Ringwald M."/>
            <person name="Rost B."/>
            <person name="Ruan Y."/>
            <person name="Salzberg S.L."/>
            <person name="Sandelin A."/>
            <person name="Schneider C."/>
            <person name="Schoenbach C."/>
            <person name="Sekiguchi K."/>
            <person name="Semple C.A."/>
            <person name="Seno S."/>
            <person name="Sessa L."/>
            <person name="Sheng Y."/>
            <person name="Shibata Y."/>
            <person name="Shimada H."/>
            <person name="Shimada K."/>
            <person name="Silva D."/>
            <person name="Sinclair B."/>
            <person name="Sperling S."/>
            <person name="Stupka E."/>
            <person name="Sugiura K."/>
            <person name="Sultana R."/>
            <person name="Takenaka Y."/>
            <person name="Taki K."/>
            <person name="Tammoja K."/>
            <person name="Tan S.L."/>
            <person name="Tang S."/>
            <person name="Taylor M.S."/>
            <person name="Tegner J."/>
            <person name="Teichmann S.A."/>
            <person name="Ueda H.R."/>
            <person name="van Nimwegen E."/>
            <person name="Verardo R."/>
            <person name="Wei C.L."/>
            <person name="Yagi K."/>
            <person name="Yamanishi H."/>
            <person name="Zabarovsky E."/>
            <person name="Zhu S."/>
            <person name="Zimmer A."/>
            <person name="Hide W."/>
            <person name="Bult C."/>
            <person name="Grimmond S.M."/>
            <person name="Teasdale R.D."/>
            <person name="Liu E.T."/>
            <person name="Brusic V."/>
            <person name="Quackenbush J."/>
            <person name="Wahlestedt C."/>
            <person name="Mattick J.S."/>
            <person name="Hume D.A."/>
            <person name="Kai C."/>
            <person name="Sasaki D."/>
            <person name="Tomaru Y."/>
            <person name="Fukuda S."/>
            <person name="Kanamori-Katayama M."/>
            <person name="Suzuki M."/>
            <person name="Aoki J."/>
            <person name="Arakawa T."/>
            <person name="Iida J."/>
            <person name="Imamura K."/>
            <person name="Itoh M."/>
            <person name="Kato T."/>
            <person name="Kawaji H."/>
            <person name="Kawagashira N."/>
            <person name="Kawashima T."/>
            <person name="Kojima M."/>
            <person name="Kondo S."/>
            <person name="Konno H."/>
            <person name="Nakano K."/>
            <person name="Ninomiya N."/>
            <person name="Nishio T."/>
            <person name="Okada M."/>
            <person name="Plessy C."/>
            <person name="Shibata K."/>
            <person name="Shiraki T."/>
            <person name="Suzuki S."/>
            <person name="Tagami M."/>
            <person name="Waki K."/>
            <person name="Watahiki A."/>
            <person name="Okamura-Oho Y."/>
            <person name="Suzuki H."/>
            <person name="Kawai J."/>
            <person name="Hayashizaki Y."/>
        </authorList>
    </citation>
    <scope>NUCLEOTIDE SEQUENCE [LARGE SCALE MRNA]</scope>
    <source>
        <strain>C57BL/6J</strain>
        <strain>DBA/2J</strain>
        <tissue>Embryo</tissue>
        <tissue>Embryonic head</tissue>
        <tissue>Embryonic liver</tissue>
        <tissue>Lymphoma</tissue>
    </source>
</reference>
<reference key="2">
    <citation type="journal article" date="2004" name="Genome Res.">
        <title>The status, quality, and expansion of the NIH full-length cDNA project: the Mammalian Gene Collection (MGC).</title>
        <authorList>
            <consortium name="The MGC Project Team"/>
        </authorList>
    </citation>
    <scope>NUCLEOTIDE SEQUENCE [LARGE SCALE MRNA]</scope>
    <source>
        <strain>FVB/N-3</strain>
        <tissue>Mammary tumor</tissue>
    </source>
</reference>
<reference key="3">
    <citation type="journal article" date="2000" name="Mol. Cell Biol. Res. Commun.">
        <title>Identification of proteassemblin, a mammalian homologue of the yeast protein, Ump1p, that is required for normal proteasome assembly.</title>
        <authorList>
            <person name="Griffin T.A."/>
            <person name="Slack J.P."/>
            <person name="McCluskey T.S."/>
            <person name="Monaco J.J."/>
            <person name="Colbert R.A."/>
        </authorList>
    </citation>
    <scope>TISSUE SPECIFICITY</scope>
</reference>
<reference key="4">
    <citation type="journal article" date="2000" name="Proc. Natl. Acad. Sci. U.S.A.">
        <title>Identification and characterization of a mammalian protein interacting with 20S proteasome precursors.</title>
        <authorList>
            <person name="Burri L."/>
            <person name="Hoeckendorff J."/>
            <person name="Boehm U."/>
            <person name="Klamp T."/>
            <person name="Dohmen R.J."/>
            <person name="Levy F."/>
        </authorList>
    </citation>
    <scope>INDUCTION</scope>
</reference>
<reference key="5">
    <citation type="journal article" date="2010" name="Cell">
        <title>A tissue-specific atlas of mouse protein phosphorylation and expression.</title>
        <authorList>
            <person name="Huttlin E.L."/>
            <person name="Jedrychowski M.P."/>
            <person name="Elias J.E."/>
            <person name="Goswami T."/>
            <person name="Rad R."/>
            <person name="Beausoleil S.A."/>
            <person name="Villen J."/>
            <person name="Haas W."/>
            <person name="Sowa M.E."/>
            <person name="Gygi S.P."/>
        </authorList>
    </citation>
    <scope>IDENTIFICATION BY MASS SPECTROMETRY [LARGE SCALE ANALYSIS]</scope>
    <source>
        <tissue>Brain</tissue>
        <tissue>Kidney</tissue>
        <tissue>Liver</tissue>
        <tissue>Lung</tissue>
        <tissue>Pancreas</tissue>
    </source>
</reference>
<comment type="function">
    <text evidence="1">Molecular chaperone essential for the assembly of standard proteasomes and immunoproteasomes. Degraded after completion of proteasome maturation (By similarity). Mediates the association of 20S preproteasome with the endoplasmic reticulum (By similarity).</text>
</comment>
<comment type="subunit">
    <text evidence="1">Constituent of preproteasomes, but not of mature 20S proteasomes. Within the preproteasome, may directly interact with PSMB1/beta6, PSMB4/beta7, PSMB5/beta5, PSMB6/beta1 and PSMB9/beta1i. Interaction with PSMB8/beta5i is controversial. Forms tetramers (By similarity).</text>
</comment>
<comment type="subcellular location">
    <subcellularLocation>
        <location evidence="1">Cytoplasm</location>
        <location evidence="1">Cytosol</location>
    </subcellularLocation>
    <subcellularLocation>
        <location evidence="1">Nucleus</location>
    </subcellularLocation>
    <subcellularLocation>
        <location evidence="1">Microsome membrane</location>
    </subcellularLocation>
</comment>
<comment type="tissue specificity">
    <text evidence="3">Widely expressed.</text>
</comment>
<comment type="induction">
    <text evidence="4">By interferon gamma.</text>
</comment>
<comment type="similarity">
    <text evidence="5">Belongs to the POMP/UMP1 family.</text>
</comment>
<protein>
    <recommendedName>
        <fullName>Proteasome maturation protein</fullName>
    </recommendedName>
    <alternativeName>
        <fullName>Proteassemblin</fullName>
    </alternativeName>
    <alternativeName>
        <fullName>Protein UMP1 homolog</fullName>
        <shortName>mUMP1</shortName>
    </alternativeName>
</protein>
<dbReference type="EMBL" id="AK003439">
    <property type="protein sequence ID" value="BAB22791.1"/>
    <property type="molecule type" value="mRNA"/>
</dbReference>
<dbReference type="EMBL" id="AK011115">
    <property type="protein sequence ID" value="BAB27410.1"/>
    <property type="molecule type" value="mRNA"/>
</dbReference>
<dbReference type="EMBL" id="AK012455">
    <property type="protein sequence ID" value="BAB28250.1"/>
    <property type="molecule type" value="mRNA"/>
</dbReference>
<dbReference type="EMBL" id="AK013934">
    <property type="protein sequence ID" value="BAB29067.1"/>
    <property type="molecule type" value="mRNA"/>
</dbReference>
<dbReference type="EMBL" id="AK014296">
    <property type="protein sequence ID" value="BAB29252.1"/>
    <property type="molecule type" value="mRNA"/>
</dbReference>
<dbReference type="EMBL" id="AK167958">
    <property type="protein sequence ID" value="BAE39956.1"/>
    <property type="molecule type" value="mRNA"/>
</dbReference>
<dbReference type="EMBL" id="BC027016">
    <property type="protein sequence ID" value="AAH27016.1"/>
    <property type="molecule type" value="mRNA"/>
</dbReference>
<dbReference type="CCDS" id="CCDS39402.1"/>
<dbReference type="RefSeq" id="NP_079900.1">
    <property type="nucleotide sequence ID" value="NM_025624.4"/>
</dbReference>
<dbReference type="SMR" id="Q9CQT5"/>
<dbReference type="BioGRID" id="211543">
    <property type="interactions" value="2"/>
</dbReference>
<dbReference type="FunCoup" id="Q9CQT5">
    <property type="interactions" value="3307"/>
</dbReference>
<dbReference type="STRING" id="10090.ENSMUSP00000031654"/>
<dbReference type="GlyGen" id="Q9CQT5">
    <property type="glycosylation" value="1 site, 1 N-linked glycan (1 site)"/>
</dbReference>
<dbReference type="iPTMnet" id="Q9CQT5"/>
<dbReference type="PhosphoSitePlus" id="Q9CQT5"/>
<dbReference type="PaxDb" id="10090-ENSMUSP00000031654"/>
<dbReference type="PeptideAtlas" id="Q9CQT5"/>
<dbReference type="ProteomicsDB" id="289363"/>
<dbReference type="Pumba" id="Q9CQT5"/>
<dbReference type="Antibodypedia" id="7516">
    <property type="antibodies" value="120 antibodies from 27 providers"/>
</dbReference>
<dbReference type="DNASU" id="66537"/>
<dbReference type="Ensembl" id="ENSMUST00000031654.10">
    <property type="protein sequence ID" value="ENSMUSP00000031654.7"/>
    <property type="gene ID" value="ENSMUSG00000029649.11"/>
</dbReference>
<dbReference type="GeneID" id="66537"/>
<dbReference type="KEGG" id="mmu:66537"/>
<dbReference type="UCSC" id="uc009aoj.1">
    <property type="organism name" value="mouse"/>
</dbReference>
<dbReference type="AGR" id="MGI:1913787"/>
<dbReference type="CTD" id="51371"/>
<dbReference type="MGI" id="MGI:1913787">
    <property type="gene designation" value="Pomp"/>
</dbReference>
<dbReference type="VEuPathDB" id="HostDB:ENSMUSG00000029649"/>
<dbReference type="eggNOG" id="KOG3061">
    <property type="taxonomic scope" value="Eukaryota"/>
</dbReference>
<dbReference type="GeneTree" id="ENSGT00390000010734"/>
<dbReference type="HOGENOM" id="CLU_100687_3_0_1"/>
<dbReference type="InParanoid" id="Q9CQT5"/>
<dbReference type="OMA" id="HADMEKK"/>
<dbReference type="OrthoDB" id="15001at2759"/>
<dbReference type="PhylomeDB" id="Q9CQT5"/>
<dbReference type="TreeFam" id="TF323548"/>
<dbReference type="Reactome" id="R-MMU-9907900">
    <property type="pathway name" value="Proteasome assembly"/>
</dbReference>
<dbReference type="BioGRID-ORCS" id="66537">
    <property type="hits" value="24 hits in 79 CRISPR screens"/>
</dbReference>
<dbReference type="ChiTaRS" id="Pomp">
    <property type="organism name" value="mouse"/>
</dbReference>
<dbReference type="PRO" id="PR:Q9CQT5"/>
<dbReference type="Proteomes" id="UP000000589">
    <property type="component" value="Chromosome 5"/>
</dbReference>
<dbReference type="RNAct" id="Q9CQT5">
    <property type="molecule type" value="protein"/>
</dbReference>
<dbReference type="Bgee" id="ENSMUSG00000029649">
    <property type="expression patterns" value="Expressed in neural tube and 272 other cell types or tissues"/>
</dbReference>
<dbReference type="ExpressionAtlas" id="Q9CQT5">
    <property type="expression patterns" value="baseline and differential"/>
</dbReference>
<dbReference type="GO" id="GO:0005737">
    <property type="term" value="C:cytoplasm"/>
    <property type="evidence" value="ECO:0000314"/>
    <property type="project" value="MGI"/>
</dbReference>
<dbReference type="GO" id="GO:0005829">
    <property type="term" value="C:cytosol"/>
    <property type="evidence" value="ECO:0007669"/>
    <property type="project" value="UniProtKB-SubCell"/>
</dbReference>
<dbReference type="GO" id="GO:0005783">
    <property type="term" value="C:endoplasmic reticulum"/>
    <property type="evidence" value="ECO:0007669"/>
    <property type="project" value="UniProtKB-KW"/>
</dbReference>
<dbReference type="GO" id="GO:0016020">
    <property type="term" value="C:membrane"/>
    <property type="evidence" value="ECO:0007669"/>
    <property type="project" value="UniProtKB-KW"/>
</dbReference>
<dbReference type="GO" id="GO:0016607">
    <property type="term" value="C:nuclear speck"/>
    <property type="evidence" value="ECO:0007669"/>
    <property type="project" value="Ensembl"/>
</dbReference>
<dbReference type="GO" id="GO:0005634">
    <property type="term" value="C:nucleus"/>
    <property type="evidence" value="ECO:0000314"/>
    <property type="project" value="MGI"/>
</dbReference>
<dbReference type="GO" id="GO:0043248">
    <property type="term" value="P:proteasome assembly"/>
    <property type="evidence" value="ECO:0007669"/>
    <property type="project" value="Ensembl"/>
</dbReference>
<dbReference type="InterPro" id="IPR008012">
    <property type="entry name" value="Ump1"/>
</dbReference>
<dbReference type="PANTHER" id="PTHR12828:SF3">
    <property type="entry name" value="PROTEASOME MATURATION PROTEIN"/>
    <property type="match status" value="1"/>
</dbReference>
<dbReference type="PANTHER" id="PTHR12828">
    <property type="entry name" value="PROTEASOME MATURATION PROTEIN UMP1"/>
    <property type="match status" value="1"/>
</dbReference>
<dbReference type="Pfam" id="PF05348">
    <property type="entry name" value="UMP1"/>
    <property type="match status" value="1"/>
</dbReference>
<gene>
    <name type="primary">Pomp</name>
</gene>
<proteinExistence type="evidence at protein level"/>
<evidence type="ECO:0000250" key="1"/>
<evidence type="ECO:0000250" key="2">
    <source>
        <dbReference type="UniProtKB" id="Q9Y244"/>
    </source>
</evidence>
<evidence type="ECO:0000269" key="3">
    <source>
    </source>
</evidence>
<evidence type="ECO:0000269" key="4">
    <source>
    </source>
</evidence>
<evidence type="ECO:0000305" key="5"/>
<keyword id="KW-0143">Chaperone</keyword>
<keyword id="KW-0963">Cytoplasm</keyword>
<keyword id="KW-0256">Endoplasmic reticulum</keyword>
<keyword id="KW-1017">Isopeptide bond</keyword>
<keyword id="KW-0472">Membrane</keyword>
<keyword id="KW-0492">Microsome</keyword>
<keyword id="KW-0539">Nucleus</keyword>
<keyword id="KW-1185">Reference proteome</keyword>
<keyword id="KW-0832">Ubl conjugation</keyword>
<sequence>MNARGLGSELKDSIPVAELSASGPFESHDLLRKGFSCVKNELLPSHPLELSEKNFQLNQDKMNFSTLRNIQGLFAPLKLQMEFKAVQQVHRLPFLPSSNLSLDILRGNDETIGFEDILNDPSQSELMGEPHVMVEHKLGLL</sequence>
<name>POMP_MOUSE</name>
<organism>
    <name type="scientific">Mus musculus</name>
    <name type="common">Mouse</name>
    <dbReference type="NCBI Taxonomy" id="10090"/>
    <lineage>
        <taxon>Eukaryota</taxon>
        <taxon>Metazoa</taxon>
        <taxon>Chordata</taxon>
        <taxon>Craniata</taxon>
        <taxon>Vertebrata</taxon>
        <taxon>Euteleostomi</taxon>
        <taxon>Mammalia</taxon>
        <taxon>Eutheria</taxon>
        <taxon>Euarchontoglires</taxon>
        <taxon>Glires</taxon>
        <taxon>Rodentia</taxon>
        <taxon>Myomorpha</taxon>
        <taxon>Muroidea</taxon>
        <taxon>Muridae</taxon>
        <taxon>Murinae</taxon>
        <taxon>Mus</taxon>
        <taxon>Mus</taxon>
    </lineage>
</organism>
<accession>Q9CQT5</accession>
<accession>Q9CXV8</accession>
<accession>Q9CZL7</accession>
<feature type="chain" id="PRO_0000247185" description="Proteasome maturation protein">
    <location>
        <begin position="1"/>
        <end position="141"/>
    </location>
</feature>
<feature type="cross-link" description="Glycyl lysine isopeptide (Lys-Gly) (interchain with G-Cter in SUMO2)" evidence="2">
    <location>
        <position position="39"/>
    </location>
</feature>
<feature type="sequence conflict" description="In Ref. 1; BAB29067." evidence="5" ref="1">
    <original>E</original>
    <variation>K</variation>
    <location>
        <position position="52"/>
    </location>
</feature>
<feature type="sequence conflict" description="In Ref. 1; BAB28250." evidence="5" ref="1">
    <original>L</original>
    <variation>Q</variation>
    <location>
        <position position="126"/>
    </location>
</feature>